<reference key="1">
    <citation type="journal article" date="2005" name="Nat. Biotechnol.">
        <title>The complete genome sequence of the meat-borne lactic acid bacterium Lactobacillus sakei 23K.</title>
        <authorList>
            <person name="Chaillou S."/>
            <person name="Champomier-Verges M.-C."/>
            <person name="Cornet M."/>
            <person name="Crutz-Le Coq A.-M."/>
            <person name="Dudez A.-M."/>
            <person name="Martin V."/>
            <person name="Beaufils S."/>
            <person name="Darbon-Rongere E."/>
            <person name="Bossy R."/>
            <person name="Loux V."/>
            <person name="Zagorec M."/>
        </authorList>
    </citation>
    <scope>NUCLEOTIDE SEQUENCE [LARGE SCALE GENOMIC DNA]</scope>
    <source>
        <strain>23K</strain>
    </source>
</reference>
<feature type="chain" id="PRO_1000095992" description="Phosphoribosylaminoimidazole-succinocarboxamide synthase">
    <location>
        <begin position="1"/>
        <end position="241"/>
    </location>
</feature>
<comment type="catalytic activity">
    <reaction evidence="1">
        <text>5-amino-1-(5-phospho-D-ribosyl)imidazole-4-carboxylate + L-aspartate + ATP = (2S)-2-[5-amino-1-(5-phospho-beta-D-ribosyl)imidazole-4-carboxamido]succinate + ADP + phosphate + 2 H(+)</text>
        <dbReference type="Rhea" id="RHEA:22628"/>
        <dbReference type="ChEBI" id="CHEBI:15378"/>
        <dbReference type="ChEBI" id="CHEBI:29991"/>
        <dbReference type="ChEBI" id="CHEBI:30616"/>
        <dbReference type="ChEBI" id="CHEBI:43474"/>
        <dbReference type="ChEBI" id="CHEBI:58443"/>
        <dbReference type="ChEBI" id="CHEBI:77657"/>
        <dbReference type="ChEBI" id="CHEBI:456216"/>
        <dbReference type="EC" id="6.3.2.6"/>
    </reaction>
</comment>
<comment type="pathway">
    <text evidence="1">Purine metabolism; IMP biosynthesis via de novo pathway; 5-amino-1-(5-phospho-D-ribosyl)imidazole-4-carboxamide from 5-amino-1-(5-phospho-D-ribosyl)imidazole-4-carboxylate: step 1/2.</text>
</comment>
<comment type="similarity">
    <text evidence="1">Belongs to the SAICAR synthetase family.</text>
</comment>
<name>PUR7_LATSS</name>
<organism>
    <name type="scientific">Latilactobacillus sakei subsp. sakei (strain 23K)</name>
    <name type="common">Lactobacillus sakei subsp. sakei</name>
    <dbReference type="NCBI Taxonomy" id="314315"/>
    <lineage>
        <taxon>Bacteria</taxon>
        <taxon>Bacillati</taxon>
        <taxon>Bacillota</taxon>
        <taxon>Bacilli</taxon>
        <taxon>Lactobacillales</taxon>
        <taxon>Lactobacillaceae</taxon>
        <taxon>Latilactobacillus</taxon>
    </lineage>
</organism>
<protein>
    <recommendedName>
        <fullName evidence="1">Phosphoribosylaminoimidazole-succinocarboxamide synthase</fullName>
        <ecNumber evidence="1">6.3.2.6</ecNumber>
    </recommendedName>
    <alternativeName>
        <fullName evidence="1">SAICAR synthetase</fullName>
    </alternativeName>
</protein>
<gene>
    <name evidence="1" type="primary">purC</name>
    <name type="ordered locus">LCA_0655</name>
</gene>
<proteinExistence type="inferred from homology"/>
<keyword id="KW-0067">ATP-binding</keyword>
<keyword id="KW-0436">Ligase</keyword>
<keyword id="KW-0547">Nucleotide-binding</keyword>
<keyword id="KW-0658">Purine biosynthesis</keyword>
<keyword id="KW-1185">Reference proteome</keyword>
<evidence type="ECO:0000255" key="1">
    <source>
        <dbReference type="HAMAP-Rule" id="MF_00137"/>
    </source>
</evidence>
<accession>Q38XX0</accession>
<sequence>MSETLLYSGKAKDLFSTDDPEVLKMIYKDQATALNGKRKEQITGKGEVNYEISKLIFAYLSQQGIETHLIKNVSETEQLVKKVTIIPLEVVLRNVVAGSFARKFGQPLGQRLEQPIIEYYYKNDALDDPAINISQATALKLVTPTEVATIEAMTKQINTLLIKLFNEIGIDLIDFKLEFGRYQGRLILADEFSPDNCRLWDQKTHSSLDKDVFRQNKGDLVTVYETVLQRLTKMIGGFANV</sequence>
<dbReference type="EC" id="6.3.2.6" evidence="1"/>
<dbReference type="EMBL" id="CR936503">
    <property type="protein sequence ID" value="CAI54959.1"/>
    <property type="molecule type" value="Genomic_DNA"/>
</dbReference>
<dbReference type="RefSeq" id="WP_011374364.1">
    <property type="nucleotide sequence ID" value="NC_007576.1"/>
</dbReference>
<dbReference type="SMR" id="Q38XX0"/>
<dbReference type="STRING" id="314315.LCA_0655"/>
<dbReference type="GeneID" id="57133511"/>
<dbReference type="KEGG" id="lsa:LCA_0655"/>
<dbReference type="eggNOG" id="COG0152">
    <property type="taxonomic scope" value="Bacteria"/>
</dbReference>
<dbReference type="HOGENOM" id="CLU_061495_2_0_9"/>
<dbReference type="OrthoDB" id="9801549at2"/>
<dbReference type="UniPathway" id="UPA00074">
    <property type="reaction ID" value="UER00131"/>
</dbReference>
<dbReference type="Proteomes" id="UP000002707">
    <property type="component" value="Chromosome"/>
</dbReference>
<dbReference type="GO" id="GO:0005524">
    <property type="term" value="F:ATP binding"/>
    <property type="evidence" value="ECO:0007669"/>
    <property type="project" value="UniProtKB-KW"/>
</dbReference>
<dbReference type="GO" id="GO:0004639">
    <property type="term" value="F:phosphoribosylaminoimidazolesuccinocarboxamide synthase activity"/>
    <property type="evidence" value="ECO:0007669"/>
    <property type="project" value="UniProtKB-UniRule"/>
</dbReference>
<dbReference type="GO" id="GO:0006189">
    <property type="term" value="P:'de novo' IMP biosynthetic process"/>
    <property type="evidence" value="ECO:0007669"/>
    <property type="project" value="UniProtKB-UniRule"/>
</dbReference>
<dbReference type="GO" id="GO:0009236">
    <property type="term" value="P:cobalamin biosynthetic process"/>
    <property type="evidence" value="ECO:0007669"/>
    <property type="project" value="InterPro"/>
</dbReference>
<dbReference type="CDD" id="cd01415">
    <property type="entry name" value="SAICAR_synt_PurC"/>
    <property type="match status" value="1"/>
</dbReference>
<dbReference type="FunFam" id="3.30.470.20:FF:000006">
    <property type="entry name" value="Phosphoribosylaminoimidazole-succinocarboxamide synthase"/>
    <property type="match status" value="1"/>
</dbReference>
<dbReference type="Gene3D" id="3.30.470.20">
    <property type="entry name" value="ATP-grasp fold, B domain"/>
    <property type="match status" value="1"/>
</dbReference>
<dbReference type="Gene3D" id="3.30.200.20">
    <property type="entry name" value="Phosphorylase Kinase, domain 1"/>
    <property type="match status" value="1"/>
</dbReference>
<dbReference type="HAMAP" id="MF_00137">
    <property type="entry name" value="SAICAR_synth"/>
    <property type="match status" value="1"/>
</dbReference>
<dbReference type="InterPro" id="IPR028923">
    <property type="entry name" value="SAICAR_synt/ADE2_N"/>
</dbReference>
<dbReference type="InterPro" id="IPR033934">
    <property type="entry name" value="SAICAR_synt_PurC"/>
</dbReference>
<dbReference type="InterPro" id="IPR001636">
    <property type="entry name" value="SAICAR_synth"/>
</dbReference>
<dbReference type="InterPro" id="IPR050089">
    <property type="entry name" value="SAICAR_synthetase"/>
</dbReference>
<dbReference type="InterPro" id="IPR018236">
    <property type="entry name" value="SAICAR_synthetase_CS"/>
</dbReference>
<dbReference type="NCBIfam" id="TIGR00081">
    <property type="entry name" value="purC"/>
    <property type="match status" value="1"/>
</dbReference>
<dbReference type="PANTHER" id="PTHR43599">
    <property type="entry name" value="MULTIFUNCTIONAL PROTEIN ADE2"/>
    <property type="match status" value="1"/>
</dbReference>
<dbReference type="PANTHER" id="PTHR43599:SF3">
    <property type="entry name" value="SI:DKEY-6E2.2"/>
    <property type="match status" value="1"/>
</dbReference>
<dbReference type="Pfam" id="PF01259">
    <property type="entry name" value="SAICAR_synt"/>
    <property type="match status" value="1"/>
</dbReference>
<dbReference type="SUPFAM" id="SSF56104">
    <property type="entry name" value="SAICAR synthase-like"/>
    <property type="match status" value="1"/>
</dbReference>
<dbReference type="PROSITE" id="PS01057">
    <property type="entry name" value="SAICAR_SYNTHETASE_1"/>
    <property type="match status" value="1"/>
</dbReference>
<dbReference type="PROSITE" id="PS01058">
    <property type="entry name" value="SAICAR_SYNTHETASE_2"/>
    <property type="match status" value="1"/>
</dbReference>